<sequence length="180" mass="20037">MSRIGKLPIKIVDSVKVDIKDNIVTVEGKRGKLSQELKSSIKVRVEDSNIIVERSFDDKQTRAFHGLYRSLISNMVKGVSDGFSKSLTISGIGYRVEQQGTSLFFNLGYSTQFEYVIPEGINIRLDGNTKIAVEGIDKCRVGQVAAEIRGLRVPEPYKGKGIKYDNEVIRRKVGKSGVKK</sequence>
<gene>
    <name evidence="1" type="primary">rplF</name>
    <name type="ordered locus">BT0493</name>
</gene>
<reference key="1">
    <citation type="submission" date="2004-12" db="EMBL/GenBank/DDBJ databases">
        <title>The genome sequence of Borrelia hermsii and Borrelia turicatae: comparative analysis of two agents of endemic N. America relapsing fever.</title>
        <authorList>
            <person name="Porcella S.F."/>
            <person name="Raffel S.J."/>
            <person name="Schrumpf M.E."/>
            <person name="Montgomery B."/>
            <person name="Smith T."/>
            <person name="Schwan T.G."/>
        </authorList>
    </citation>
    <scope>NUCLEOTIDE SEQUENCE [LARGE SCALE GENOMIC DNA]</scope>
    <source>
        <strain>91E135</strain>
    </source>
</reference>
<protein>
    <recommendedName>
        <fullName evidence="1">Large ribosomal subunit protein uL6</fullName>
    </recommendedName>
    <alternativeName>
        <fullName evidence="2">50S ribosomal protein L6</fullName>
    </alternativeName>
</protein>
<keyword id="KW-1185">Reference proteome</keyword>
<keyword id="KW-0687">Ribonucleoprotein</keyword>
<keyword id="KW-0689">Ribosomal protein</keyword>
<keyword id="KW-0694">RNA-binding</keyword>
<keyword id="KW-0699">rRNA-binding</keyword>
<dbReference type="EMBL" id="CP000049">
    <property type="protein sequence ID" value="AAX17821.1"/>
    <property type="molecule type" value="Genomic_DNA"/>
</dbReference>
<dbReference type="RefSeq" id="WP_011772440.1">
    <property type="nucleotide sequence ID" value="NC_008710.1"/>
</dbReference>
<dbReference type="SMR" id="A1QZS9"/>
<dbReference type="KEGG" id="btu:BT0493"/>
<dbReference type="eggNOG" id="COG0097">
    <property type="taxonomic scope" value="Bacteria"/>
</dbReference>
<dbReference type="HOGENOM" id="CLU_065464_1_2_12"/>
<dbReference type="Proteomes" id="UP000001205">
    <property type="component" value="Chromosome"/>
</dbReference>
<dbReference type="GO" id="GO:0022625">
    <property type="term" value="C:cytosolic large ribosomal subunit"/>
    <property type="evidence" value="ECO:0007669"/>
    <property type="project" value="TreeGrafter"/>
</dbReference>
<dbReference type="GO" id="GO:0019843">
    <property type="term" value="F:rRNA binding"/>
    <property type="evidence" value="ECO:0007669"/>
    <property type="project" value="UniProtKB-UniRule"/>
</dbReference>
<dbReference type="GO" id="GO:0003735">
    <property type="term" value="F:structural constituent of ribosome"/>
    <property type="evidence" value="ECO:0007669"/>
    <property type="project" value="InterPro"/>
</dbReference>
<dbReference type="GO" id="GO:0002181">
    <property type="term" value="P:cytoplasmic translation"/>
    <property type="evidence" value="ECO:0007669"/>
    <property type="project" value="TreeGrafter"/>
</dbReference>
<dbReference type="FunFam" id="3.90.930.12:FF:000002">
    <property type="entry name" value="50S ribosomal protein L6"/>
    <property type="match status" value="1"/>
</dbReference>
<dbReference type="Gene3D" id="3.90.930.12">
    <property type="entry name" value="Ribosomal protein L6, alpha-beta domain"/>
    <property type="match status" value="2"/>
</dbReference>
<dbReference type="HAMAP" id="MF_01365_B">
    <property type="entry name" value="Ribosomal_uL6_B"/>
    <property type="match status" value="1"/>
</dbReference>
<dbReference type="InterPro" id="IPR000702">
    <property type="entry name" value="Ribosomal_uL6-like"/>
</dbReference>
<dbReference type="InterPro" id="IPR036789">
    <property type="entry name" value="Ribosomal_uL6-like_a/b-dom_sf"/>
</dbReference>
<dbReference type="InterPro" id="IPR020040">
    <property type="entry name" value="Ribosomal_uL6_a/b-dom"/>
</dbReference>
<dbReference type="InterPro" id="IPR019906">
    <property type="entry name" value="Ribosomal_uL6_bac-type"/>
</dbReference>
<dbReference type="InterPro" id="IPR002358">
    <property type="entry name" value="Ribosomal_uL6_CS"/>
</dbReference>
<dbReference type="NCBIfam" id="TIGR03654">
    <property type="entry name" value="L6_bact"/>
    <property type="match status" value="1"/>
</dbReference>
<dbReference type="PANTHER" id="PTHR11655">
    <property type="entry name" value="60S/50S RIBOSOMAL PROTEIN L6/L9"/>
    <property type="match status" value="1"/>
</dbReference>
<dbReference type="PANTHER" id="PTHR11655:SF14">
    <property type="entry name" value="LARGE RIBOSOMAL SUBUNIT PROTEIN UL6M"/>
    <property type="match status" value="1"/>
</dbReference>
<dbReference type="Pfam" id="PF00347">
    <property type="entry name" value="Ribosomal_L6"/>
    <property type="match status" value="2"/>
</dbReference>
<dbReference type="PIRSF" id="PIRSF002162">
    <property type="entry name" value="Ribosomal_L6"/>
    <property type="match status" value="1"/>
</dbReference>
<dbReference type="PRINTS" id="PR00059">
    <property type="entry name" value="RIBOSOMALL6"/>
</dbReference>
<dbReference type="SUPFAM" id="SSF56053">
    <property type="entry name" value="Ribosomal protein L6"/>
    <property type="match status" value="2"/>
</dbReference>
<dbReference type="PROSITE" id="PS00525">
    <property type="entry name" value="RIBOSOMAL_L6_1"/>
    <property type="match status" value="1"/>
</dbReference>
<comment type="function">
    <text evidence="1">This protein binds to the 23S rRNA, and is important in its secondary structure. It is located near the subunit interface in the base of the L7/L12 stalk, and near the tRNA binding site of the peptidyltransferase center.</text>
</comment>
<comment type="subunit">
    <text evidence="1">Part of the 50S ribosomal subunit.</text>
</comment>
<comment type="similarity">
    <text evidence="1">Belongs to the universal ribosomal protein uL6 family.</text>
</comment>
<proteinExistence type="inferred from homology"/>
<evidence type="ECO:0000255" key="1">
    <source>
        <dbReference type="HAMAP-Rule" id="MF_01365"/>
    </source>
</evidence>
<evidence type="ECO:0000305" key="2"/>
<name>RL6_BORT9</name>
<accession>A1QZS9</accession>
<organism>
    <name type="scientific">Borrelia turicatae (strain 91E135)</name>
    <dbReference type="NCBI Taxonomy" id="314724"/>
    <lineage>
        <taxon>Bacteria</taxon>
        <taxon>Pseudomonadati</taxon>
        <taxon>Spirochaetota</taxon>
        <taxon>Spirochaetia</taxon>
        <taxon>Spirochaetales</taxon>
        <taxon>Borreliaceae</taxon>
        <taxon>Borrelia</taxon>
    </lineage>
</organism>
<feature type="chain" id="PRO_1000166792" description="Large ribosomal subunit protein uL6">
    <location>
        <begin position="1"/>
        <end position="180"/>
    </location>
</feature>